<organism>
    <name type="scientific">Arabidopsis thaliana</name>
    <name type="common">Mouse-ear cress</name>
    <dbReference type="NCBI Taxonomy" id="3702"/>
    <lineage>
        <taxon>Eukaryota</taxon>
        <taxon>Viridiplantae</taxon>
        <taxon>Streptophyta</taxon>
        <taxon>Embryophyta</taxon>
        <taxon>Tracheophyta</taxon>
        <taxon>Spermatophyta</taxon>
        <taxon>Magnoliopsida</taxon>
        <taxon>eudicotyledons</taxon>
        <taxon>Gunneridae</taxon>
        <taxon>Pentapetalae</taxon>
        <taxon>rosids</taxon>
        <taxon>malvids</taxon>
        <taxon>Brassicales</taxon>
        <taxon>Brassicaceae</taxon>
        <taxon>Camelineae</taxon>
        <taxon>Arabidopsis</taxon>
    </lineage>
</organism>
<accession>O04319</accession>
<gene>
    <name type="primary">PAB6</name>
    <name type="ordered locus">At3g16380</name>
    <name type="ORF">MYA6.18</name>
    <name type="ORF">T2O4.13</name>
</gene>
<evidence type="ECO:0000250" key="1"/>
<evidence type="ECO:0000255" key="2">
    <source>
        <dbReference type="PROSITE-ProRule" id="PRU00176"/>
    </source>
</evidence>
<evidence type="ECO:0000256" key="3">
    <source>
        <dbReference type="SAM" id="MobiDB-lite"/>
    </source>
</evidence>
<evidence type="ECO:0000269" key="4">
    <source>
    </source>
</evidence>
<evidence type="ECO:0000305" key="5"/>
<dbReference type="EMBL" id="AB023046">
    <property type="protein sequence ID" value="BAB01277.1"/>
    <property type="molecule type" value="Genomic_DNA"/>
</dbReference>
<dbReference type="EMBL" id="AC001645">
    <property type="protein sequence ID" value="AAB63640.1"/>
    <property type="molecule type" value="Genomic_DNA"/>
</dbReference>
<dbReference type="EMBL" id="CP002686">
    <property type="protein sequence ID" value="AEE75805.1"/>
    <property type="molecule type" value="Genomic_DNA"/>
</dbReference>
<dbReference type="RefSeq" id="NP_188259.1">
    <property type="nucleotide sequence ID" value="NM_112509.2"/>
</dbReference>
<dbReference type="SMR" id="O04319"/>
<dbReference type="FunCoup" id="O04319">
    <property type="interactions" value="112"/>
</dbReference>
<dbReference type="STRING" id="3702.O04319"/>
<dbReference type="iPTMnet" id="O04319"/>
<dbReference type="PaxDb" id="3702-AT3G16380.1"/>
<dbReference type="ProteomicsDB" id="226048"/>
<dbReference type="EnsemblPlants" id="AT3G16380.1">
    <property type="protein sequence ID" value="AT3G16380.1"/>
    <property type="gene ID" value="AT3G16380"/>
</dbReference>
<dbReference type="GeneID" id="820885"/>
<dbReference type="Gramene" id="AT3G16380.1">
    <property type="protein sequence ID" value="AT3G16380.1"/>
    <property type="gene ID" value="AT3G16380"/>
</dbReference>
<dbReference type="KEGG" id="ath:AT3G16380"/>
<dbReference type="Araport" id="AT3G16380"/>
<dbReference type="TAIR" id="AT3G16380">
    <property type="gene designation" value="PAB6"/>
</dbReference>
<dbReference type="eggNOG" id="KOG0123">
    <property type="taxonomic scope" value="Eukaryota"/>
</dbReference>
<dbReference type="HOGENOM" id="CLU_012062_22_6_1"/>
<dbReference type="InParanoid" id="O04319"/>
<dbReference type="OMA" id="CQGVKLY"/>
<dbReference type="PhylomeDB" id="O04319"/>
<dbReference type="PRO" id="PR:O04319"/>
<dbReference type="Proteomes" id="UP000006548">
    <property type="component" value="Chromosome 3"/>
</dbReference>
<dbReference type="ExpressionAtlas" id="O04319">
    <property type="expression patterns" value="baseline and differential"/>
</dbReference>
<dbReference type="GO" id="GO:0005737">
    <property type="term" value="C:cytoplasm"/>
    <property type="evidence" value="ECO:0007669"/>
    <property type="project" value="UniProtKB-SubCell"/>
</dbReference>
<dbReference type="GO" id="GO:0005634">
    <property type="term" value="C:nucleus"/>
    <property type="evidence" value="ECO:0007669"/>
    <property type="project" value="UniProtKB-SubCell"/>
</dbReference>
<dbReference type="GO" id="GO:0003723">
    <property type="term" value="F:RNA binding"/>
    <property type="evidence" value="ECO:0007669"/>
    <property type="project" value="UniProtKB-KW"/>
</dbReference>
<dbReference type="GO" id="GO:0016071">
    <property type="term" value="P:mRNA metabolic process"/>
    <property type="evidence" value="ECO:0000304"/>
    <property type="project" value="TAIR"/>
</dbReference>
<dbReference type="GO" id="GO:0006417">
    <property type="term" value="P:regulation of translation"/>
    <property type="evidence" value="ECO:0007669"/>
    <property type="project" value="UniProtKB-KW"/>
</dbReference>
<dbReference type="GO" id="GO:0006413">
    <property type="term" value="P:translational initiation"/>
    <property type="evidence" value="ECO:0000304"/>
    <property type="project" value="TAIR"/>
</dbReference>
<dbReference type="FunFam" id="3.30.70.330:FF:000651">
    <property type="entry name" value="Poly(A) binding protein cytoplasmic 1 like"/>
    <property type="match status" value="1"/>
</dbReference>
<dbReference type="FunFam" id="3.30.70.330:FF:000500">
    <property type="entry name" value="Polyadenylate-binding protein"/>
    <property type="match status" value="1"/>
</dbReference>
<dbReference type="FunFam" id="3.30.70.330:FF:000819">
    <property type="entry name" value="Polyadenylate-binding protein"/>
    <property type="match status" value="1"/>
</dbReference>
<dbReference type="Gene3D" id="3.30.70.330">
    <property type="match status" value="4"/>
</dbReference>
<dbReference type="InterPro" id="IPR050502">
    <property type="entry name" value="Euk_RNA-bind_prot"/>
</dbReference>
<dbReference type="InterPro" id="IPR012677">
    <property type="entry name" value="Nucleotide-bd_a/b_plait_sf"/>
</dbReference>
<dbReference type="InterPro" id="IPR035979">
    <property type="entry name" value="RBD_domain_sf"/>
</dbReference>
<dbReference type="InterPro" id="IPR000504">
    <property type="entry name" value="RRM_dom"/>
</dbReference>
<dbReference type="PANTHER" id="PTHR48025">
    <property type="entry name" value="OS02G0815200 PROTEIN"/>
    <property type="match status" value="1"/>
</dbReference>
<dbReference type="PANTHER" id="PTHR48025:SF1">
    <property type="entry name" value="RRM DOMAIN-CONTAINING PROTEIN"/>
    <property type="match status" value="1"/>
</dbReference>
<dbReference type="Pfam" id="PF00076">
    <property type="entry name" value="RRM_1"/>
    <property type="match status" value="4"/>
</dbReference>
<dbReference type="SMART" id="SM00360">
    <property type="entry name" value="RRM"/>
    <property type="match status" value="4"/>
</dbReference>
<dbReference type="SUPFAM" id="SSF54928">
    <property type="entry name" value="RNA-binding domain, RBD"/>
    <property type="match status" value="3"/>
</dbReference>
<dbReference type="PROSITE" id="PS50102">
    <property type="entry name" value="RRM"/>
    <property type="match status" value="4"/>
</dbReference>
<reference key="1">
    <citation type="journal article" date="2000" name="DNA Res.">
        <title>Structural analysis of Arabidopsis thaliana chromosome 3. I. Sequence features of the regions of 4,504,864 bp covered by sixty P1 and TAC clones.</title>
        <authorList>
            <person name="Sato S."/>
            <person name="Nakamura Y."/>
            <person name="Kaneko T."/>
            <person name="Katoh T."/>
            <person name="Asamizu E."/>
            <person name="Tabata S."/>
        </authorList>
    </citation>
    <scope>NUCLEOTIDE SEQUENCE [LARGE SCALE GENOMIC DNA]</scope>
    <source>
        <strain>cv. Columbia</strain>
    </source>
</reference>
<reference key="2">
    <citation type="journal article" date="2000" name="Nature">
        <title>Sequence and analysis of chromosome 3 of the plant Arabidopsis thaliana.</title>
        <authorList>
            <person name="Salanoubat M."/>
            <person name="Lemcke K."/>
            <person name="Rieger M."/>
            <person name="Ansorge W."/>
            <person name="Unseld M."/>
            <person name="Fartmann B."/>
            <person name="Valle G."/>
            <person name="Bloecker H."/>
            <person name="Perez-Alonso M."/>
            <person name="Obermaier B."/>
            <person name="Delseny M."/>
            <person name="Boutry M."/>
            <person name="Grivell L.A."/>
            <person name="Mache R."/>
            <person name="Puigdomenech P."/>
            <person name="De Simone V."/>
            <person name="Choisne N."/>
            <person name="Artiguenave F."/>
            <person name="Robert C."/>
            <person name="Brottier P."/>
            <person name="Wincker P."/>
            <person name="Cattolico L."/>
            <person name="Weissenbach J."/>
            <person name="Saurin W."/>
            <person name="Quetier F."/>
            <person name="Schaefer M."/>
            <person name="Mueller-Auer S."/>
            <person name="Gabel C."/>
            <person name="Fuchs M."/>
            <person name="Benes V."/>
            <person name="Wurmbach E."/>
            <person name="Drzonek H."/>
            <person name="Erfle H."/>
            <person name="Jordan N."/>
            <person name="Bangert S."/>
            <person name="Wiedelmann R."/>
            <person name="Kranz H."/>
            <person name="Voss H."/>
            <person name="Holland R."/>
            <person name="Brandt P."/>
            <person name="Nyakatura G."/>
            <person name="Vezzi A."/>
            <person name="D'Angelo M."/>
            <person name="Pallavicini A."/>
            <person name="Toppo S."/>
            <person name="Simionati B."/>
            <person name="Conrad A."/>
            <person name="Hornischer K."/>
            <person name="Kauer G."/>
            <person name="Loehnert T.-H."/>
            <person name="Nordsiek G."/>
            <person name="Reichelt J."/>
            <person name="Scharfe M."/>
            <person name="Schoen O."/>
            <person name="Bargues M."/>
            <person name="Terol J."/>
            <person name="Climent J."/>
            <person name="Navarro P."/>
            <person name="Collado C."/>
            <person name="Perez-Perez A."/>
            <person name="Ottenwaelder B."/>
            <person name="Duchemin D."/>
            <person name="Cooke R."/>
            <person name="Laudie M."/>
            <person name="Berger-Llauro C."/>
            <person name="Purnelle B."/>
            <person name="Masuy D."/>
            <person name="de Haan M."/>
            <person name="Maarse A.C."/>
            <person name="Alcaraz J.-P."/>
            <person name="Cottet A."/>
            <person name="Casacuberta E."/>
            <person name="Monfort A."/>
            <person name="Argiriou A."/>
            <person name="Flores M."/>
            <person name="Liguori R."/>
            <person name="Vitale D."/>
            <person name="Mannhaupt G."/>
            <person name="Haase D."/>
            <person name="Schoof H."/>
            <person name="Rudd S."/>
            <person name="Zaccaria P."/>
            <person name="Mewes H.-W."/>
            <person name="Mayer K.F.X."/>
            <person name="Kaul S."/>
            <person name="Town C.D."/>
            <person name="Koo H.L."/>
            <person name="Tallon L.J."/>
            <person name="Jenkins J."/>
            <person name="Rooney T."/>
            <person name="Rizzo M."/>
            <person name="Walts A."/>
            <person name="Utterback T."/>
            <person name="Fujii C.Y."/>
            <person name="Shea T.P."/>
            <person name="Creasy T.H."/>
            <person name="Haas B."/>
            <person name="Maiti R."/>
            <person name="Wu D."/>
            <person name="Peterson J."/>
            <person name="Van Aken S."/>
            <person name="Pai G."/>
            <person name="Militscher J."/>
            <person name="Sellers P."/>
            <person name="Gill J.E."/>
            <person name="Feldblyum T.V."/>
            <person name="Preuss D."/>
            <person name="Lin X."/>
            <person name="Nierman W.C."/>
            <person name="Salzberg S.L."/>
            <person name="White O."/>
            <person name="Venter J.C."/>
            <person name="Fraser C.M."/>
            <person name="Kaneko T."/>
            <person name="Nakamura Y."/>
            <person name="Sato S."/>
            <person name="Kato T."/>
            <person name="Asamizu E."/>
            <person name="Sasamoto S."/>
            <person name="Kimura T."/>
            <person name="Idesawa K."/>
            <person name="Kawashima K."/>
            <person name="Kishida Y."/>
            <person name="Kiyokawa C."/>
            <person name="Kohara M."/>
            <person name="Matsumoto M."/>
            <person name="Matsuno A."/>
            <person name="Muraki A."/>
            <person name="Nakayama S."/>
            <person name="Nakazaki N."/>
            <person name="Shinpo S."/>
            <person name="Takeuchi C."/>
            <person name="Wada T."/>
            <person name="Watanabe A."/>
            <person name="Yamada M."/>
            <person name="Yasuda M."/>
            <person name="Tabata S."/>
        </authorList>
    </citation>
    <scope>NUCLEOTIDE SEQUENCE [LARGE SCALE GENOMIC DNA]</scope>
    <source>
        <strain>cv. Columbia</strain>
    </source>
</reference>
<reference key="3">
    <citation type="journal article" date="2017" name="Plant J.">
        <title>Araport11: a complete reannotation of the Arabidopsis thaliana reference genome.</title>
        <authorList>
            <person name="Cheng C.Y."/>
            <person name="Krishnakumar V."/>
            <person name="Chan A.P."/>
            <person name="Thibaud-Nissen F."/>
            <person name="Schobel S."/>
            <person name="Town C.D."/>
        </authorList>
    </citation>
    <scope>GENOME REANNOTATION</scope>
    <source>
        <strain>cv. Columbia</strain>
    </source>
</reference>
<reference key="4">
    <citation type="journal article" date="2003" name="Genetics">
        <title>Unexpected complexity of poly(A)-binding protein gene families in flowering plants: three conserved lineages that are at least 200 million years old and possible auto- and cross-regulation.</title>
        <authorList>
            <person name="Belostotsky D.A."/>
        </authorList>
    </citation>
    <scope>GENE FAMILY</scope>
    <scope>TISSUE SPECIFICITY</scope>
</reference>
<proteinExistence type="evidence at transcript level"/>
<keyword id="KW-0963">Cytoplasm</keyword>
<keyword id="KW-0539">Nucleus</keyword>
<keyword id="KW-1185">Reference proteome</keyword>
<keyword id="KW-0677">Repeat</keyword>
<keyword id="KW-0694">RNA-binding</keyword>
<keyword id="KW-0810">Translation regulation</keyword>
<protein>
    <recommendedName>
        <fullName>Polyadenylate-binding protein 6</fullName>
        <shortName>PABP-6</shortName>
        <shortName>Poly(A)-binding protein 6</shortName>
    </recommendedName>
</protein>
<sequence>MALVKTETQALGNHQHSSRFGSLYVGDLSPDVTEKDLIDKFSLNVPVVSVHLCRNSVTGKSMCYAYINFDSPFSASNAMTRLNHSDLKGKAMRIMWSQRDLAYRRRTRTGFANLYVKNLDSSITSSCLERMFCPFGSILSCKVVEENGQSKGFGFVQFDTEQSAVSARSALHGSMVYGKKLFVAKFINKDERAAMAGNQDSTNVYVKNLIETVTDDCLHTLFSQYGTVSSVVVMRDGMGRSRGFGFVNFCNPENAKKAMESLCGLQLGSKKLFVGKALKKDERREMLKQKFSDNFIAKPNMRWSNLYVKNLSESMNETRLREIFGCYGQIVSAKVMCHENGRSKGFGFVCFSNCEESKQAKRYLNGFLVDGKPIVVRVAERKEDRIKRLQQYFQAQPRQYTQAPSAPSPAQPVLSYVSSSYGCFQPFQVGTSYYYMGNQVPQMSGHQNITTYVPAGKVPLKERRSMHLVYKHPAYPVAKRGAKQTLVFKGEVNRNLEAATCSKATTSEENRKEERRLTLSGKLSPEVKVEESGKQLQ</sequence>
<feature type="chain" id="PRO_0000422644" description="Polyadenylate-binding protein 6">
    <location>
        <begin position="1"/>
        <end position="537"/>
    </location>
</feature>
<feature type="domain" description="RRM 1" evidence="2">
    <location>
        <begin position="21"/>
        <end position="99"/>
    </location>
</feature>
<feature type="domain" description="RRM 2" evidence="2">
    <location>
        <begin position="112"/>
        <end position="188"/>
    </location>
</feature>
<feature type="domain" description="RRM 3" evidence="2">
    <location>
        <begin position="202"/>
        <end position="279"/>
    </location>
</feature>
<feature type="domain" description="RRM 4" evidence="2">
    <location>
        <begin position="304"/>
        <end position="381"/>
    </location>
</feature>
<feature type="region of interest" description="Disordered" evidence="3">
    <location>
        <begin position="503"/>
        <end position="537"/>
    </location>
</feature>
<feature type="compositionally biased region" description="Basic and acidic residues" evidence="3">
    <location>
        <begin position="506"/>
        <end position="517"/>
    </location>
</feature>
<feature type="compositionally biased region" description="Basic and acidic residues" evidence="3">
    <location>
        <begin position="525"/>
        <end position="537"/>
    </location>
</feature>
<name>PABP6_ARATH</name>
<comment type="function">
    <text evidence="1">Binds the poly(A) tail of mRNA. Appears to be an important mediator of the multiple roles of the poly(A) tail in mRNA biogenesis, stability and translation (By similarity).</text>
</comment>
<comment type="subcellular location">
    <subcellularLocation>
        <location evidence="1">Cytoplasm</location>
    </subcellularLocation>
    <subcellularLocation>
        <location evidence="1">Nucleus</location>
    </subcellularLocation>
</comment>
<comment type="tissue specificity">
    <text evidence="4">Expressed at low levels in leaves and young seedlings.</text>
</comment>
<comment type="miscellaneous">
    <text>A.thaliana contains 8 PABP genes.</text>
</comment>
<comment type="similarity">
    <text evidence="5">Belongs to the polyadenylate-binding protein type-1 family.</text>
</comment>
<comment type="caution">
    <text evidence="5">Lacks the PABC domain, which is one of the conserved features of the PAPB family.</text>
</comment>